<accession>A7GGA7</accession>
<evidence type="ECO:0000255" key="1">
    <source>
        <dbReference type="HAMAP-Rule" id="MF_00195"/>
    </source>
</evidence>
<name>DER_CLOBL</name>
<protein>
    <recommendedName>
        <fullName evidence="1">GTPase Der</fullName>
    </recommendedName>
    <alternativeName>
        <fullName evidence="1">GTP-binding protein EngA</fullName>
    </alternativeName>
</protein>
<sequence>MGKPIVAIVGRPNVGKSTLFNKLAGKRIAIVQDTPGVTRDRIYAEAEWLNYKFTMIDTGGIEPKSEDIIVSQMRRQAQIAIEMANVIIFLVDGKEGLAPADEEVAQMLRKSKKPVVLVVNKIDKLKDENNAYEFYNLGIGDPVTISSSQALGLGDMLDRVVEYFKDDESDGEDDERINIAFIGKPNVGKSSLINKLLGEERLIVSDIPGTTRDSIDSYVDTEFGEFTLIDTAGLRRKSKVKEEIERYSVIRTYASIERADVCILMIDATEGISEQDQKIIGYAHDINKAILVIVNKWDLVEKDDKTMDKFKKELKVNLSFMPYAKYLFISAKTGQRIVKVLQTAKECYDNYTKRVKTGVLNDVISQAIMMKEPPIVGTKRLKIYYVTQIGTKPPTFIFFVNDPACIHFSYQRYLENQLRENFDFQGTGIKLEFRERKEK</sequence>
<keyword id="KW-0342">GTP-binding</keyword>
<keyword id="KW-0547">Nucleotide-binding</keyword>
<keyword id="KW-0677">Repeat</keyword>
<keyword id="KW-0690">Ribosome biogenesis</keyword>
<gene>
    <name evidence="1" type="primary">der</name>
    <name type="synonym">engA</name>
    <name type="ordered locus">CLI_2582</name>
</gene>
<dbReference type="EMBL" id="CP000728">
    <property type="protein sequence ID" value="ABS40856.1"/>
    <property type="molecule type" value="Genomic_DNA"/>
</dbReference>
<dbReference type="RefSeq" id="WP_012100431.1">
    <property type="nucleotide sequence ID" value="NC_009699.1"/>
</dbReference>
<dbReference type="SMR" id="A7GGA7"/>
<dbReference type="KEGG" id="cbf:CLI_2582"/>
<dbReference type="HOGENOM" id="CLU_016077_6_2_9"/>
<dbReference type="Proteomes" id="UP000002410">
    <property type="component" value="Chromosome"/>
</dbReference>
<dbReference type="GO" id="GO:0016887">
    <property type="term" value="F:ATP hydrolysis activity"/>
    <property type="evidence" value="ECO:0007669"/>
    <property type="project" value="InterPro"/>
</dbReference>
<dbReference type="GO" id="GO:0005525">
    <property type="term" value="F:GTP binding"/>
    <property type="evidence" value="ECO:0007669"/>
    <property type="project" value="UniProtKB-UniRule"/>
</dbReference>
<dbReference type="GO" id="GO:0043022">
    <property type="term" value="F:ribosome binding"/>
    <property type="evidence" value="ECO:0007669"/>
    <property type="project" value="TreeGrafter"/>
</dbReference>
<dbReference type="GO" id="GO:0042254">
    <property type="term" value="P:ribosome biogenesis"/>
    <property type="evidence" value="ECO:0007669"/>
    <property type="project" value="UniProtKB-KW"/>
</dbReference>
<dbReference type="CDD" id="cd01894">
    <property type="entry name" value="EngA1"/>
    <property type="match status" value="1"/>
</dbReference>
<dbReference type="CDD" id="cd01895">
    <property type="entry name" value="EngA2"/>
    <property type="match status" value="1"/>
</dbReference>
<dbReference type="FunFam" id="3.30.300.20:FF:000004">
    <property type="entry name" value="GTPase Der"/>
    <property type="match status" value="1"/>
</dbReference>
<dbReference type="FunFam" id="3.40.50.300:FF:000040">
    <property type="entry name" value="GTPase Der"/>
    <property type="match status" value="1"/>
</dbReference>
<dbReference type="FunFam" id="3.40.50.300:FF:000057">
    <property type="entry name" value="GTPase Der"/>
    <property type="match status" value="1"/>
</dbReference>
<dbReference type="Gene3D" id="3.30.300.20">
    <property type="match status" value="1"/>
</dbReference>
<dbReference type="Gene3D" id="3.40.50.300">
    <property type="entry name" value="P-loop containing nucleotide triphosphate hydrolases"/>
    <property type="match status" value="2"/>
</dbReference>
<dbReference type="HAMAP" id="MF_00195">
    <property type="entry name" value="GTPase_Der"/>
    <property type="match status" value="1"/>
</dbReference>
<dbReference type="InterPro" id="IPR003593">
    <property type="entry name" value="AAA+_ATPase"/>
</dbReference>
<dbReference type="InterPro" id="IPR031166">
    <property type="entry name" value="G_ENGA"/>
</dbReference>
<dbReference type="InterPro" id="IPR006073">
    <property type="entry name" value="GTP-bd"/>
</dbReference>
<dbReference type="InterPro" id="IPR016484">
    <property type="entry name" value="GTPase_Der"/>
</dbReference>
<dbReference type="InterPro" id="IPR032859">
    <property type="entry name" value="KH_dom-like"/>
</dbReference>
<dbReference type="InterPro" id="IPR015946">
    <property type="entry name" value="KH_dom-like_a/b"/>
</dbReference>
<dbReference type="InterPro" id="IPR027417">
    <property type="entry name" value="P-loop_NTPase"/>
</dbReference>
<dbReference type="InterPro" id="IPR005225">
    <property type="entry name" value="Small_GTP-bd"/>
</dbReference>
<dbReference type="NCBIfam" id="TIGR03594">
    <property type="entry name" value="GTPase_EngA"/>
    <property type="match status" value="1"/>
</dbReference>
<dbReference type="NCBIfam" id="TIGR00231">
    <property type="entry name" value="small_GTP"/>
    <property type="match status" value="2"/>
</dbReference>
<dbReference type="PANTHER" id="PTHR43834">
    <property type="entry name" value="GTPASE DER"/>
    <property type="match status" value="1"/>
</dbReference>
<dbReference type="PANTHER" id="PTHR43834:SF6">
    <property type="entry name" value="GTPASE DER"/>
    <property type="match status" value="1"/>
</dbReference>
<dbReference type="Pfam" id="PF14714">
    <property type="entry name" value="KH_dom-like"/>
    <property type="match status" value="1"/>
</dbReference>
<dbReference type="Pfam" id="PF01926">
    <property type="entry name" value="MMR_HSR1"/>
    <property type="match status" value="2"/>
</dbReference>
<dbReference type="PIRSF" id="PIRSF006485">
    <property type="entry name" value="GTP-binding_EngA"/>
    <property type="match status" value="1"/>
</dbReference>
<dbReference type="PRINTS" id="PR00326">
    <property type="entry name" value="GTP1OBG"/>
</dbReference>
<dbReference type="SMART" id="SM00382">
    <property type="entry name" value="AAA"/>
    <property type="match status" value="2"/>
</dbReference>
<dbReference type="SUPFAM" id="SSF52540">
    <property type="entry name" value="P-loop containing nucleoside triphosphate hydrolases"/>
    <property type="match status" value="2"/>
</dbReference>
<dbReference type="PROSITE" id="PS51712">
    <property type="entry name" value="G_ENGA"/>
    <property type="match status" value="2"/>
</dbReference>
<reference key="1">
    <citation type="submission" date="2007-06" db="EMBL/GenBank/DDBJ databases">
        <authorList>
            <person name="Brinkac L.M."/>
            <person name="Daugherty S."/>
            <person name="Dodson R.J."/>
            <person name="Madupu R."/>
            <person name="Brown J.L."/>
            <person name="Bruce D."/>
            <person name="Detter C."/>
            <person name="Munk C."/>
            <person name="Smith L.A."/>
            <person name="Smith T.J."/>
            <person name="White O."/>
            <person name="Brettin T.S."/>
        </authorList>
    </citation>
    <scope>NUCLEOTIDE SEQUENCE [LARGE SCALE GENOMIC DNA]</scope>
    <source>
        <strain>Langeland / NCTC 10281 / Type F</strain>
    </source>
</reference>
<proteinExistence type="inferred from homology"/>
<comment type="function">
    <text evidence="1">GTPase that plays an essential role in the late steps of ribosome biogenesis.</text>
</comment>
<comment type="subunit">
    <text evidence="1">Associates with the 50S ribosomal subunit.</text>
</comment>
<comment type="similarity">
    <text evidence="1">Belongs to the TRAFAC class TrmE-Era-EngA-EngB-Septin-like GTPase superfamily. EngA (Der) GTPase family.</text>
</comment>
<feature type="chain" id="PRO_1000011607" description="GTPase Der">
    <location>
        <begin position="1"/>
        <end position="439"/>
    </location>
</feature>
<feature type="domain" description="EngA-type G 1">
    <location>
        <begin position="4"/>
        <end position="168"/>
    </location>
</feature>
<feature type="domain" description="EngA-type G 2">
    <location>
        <begin position="177"/>
        <end position="352"/>
    </location>
</feature>
<feature type="domain" description="KH-like" evidence="1">
    <location>
        <begin position="353"/>
        <end position="437"/>
    </location>
</feature>
<feature type="binding site" evidence="1">
    <location>
        <begin position="10"/>
        <end position="17"/>
    </location>
    <ligand>
        <name>GTP</name>
        <dbReference type="ChEBI" id="CHEBI:37565"/>
        <label>1</label>
    </ligand>
</feature>
<feature type="binding site" evidence="1">
    <location>
        <begin position="57"/>
        <end position="61"/>
    </location>
    <ligand>
        <name>GTP</name>
        <dbReference type="ChEBI" id="CHEBI:37565"/>
        <label>1</label>
    </ligand>
</feature>
<feature type="binding site" evidence="1">
    <location>
        <begin position="120"/>
        <end position="123"/>
    </location>
    <ligand>
        <name>GTP</name>
        <dbReference type="ChEBI" id="CHEBI:37565"/>
        <label>1</label>
    </ligand>
</feature>
<feature type="binding site" evidence="1">
    <location>
        <begin position="183"/>
        <end position="190"/>
    </location>
    <ligand>
        <name>GTP</name>
        <dbReference type="ChEBI" id="CHEBI:37565"/>
        <label>2</label>
    </ligand>
</feature>
<feature type="binding site" evidence="1">
    <location>
        <begin position="230"/>
        <end position="234"/>
    </location>
    <ligand>
        <name>GTP</name>
        <dbReference type="ChEBI" id="CHEBI:37565"/>
        <label>2</label>
    </ligand>
</feature>
<feature type="binding site" evidence="1">
    <location>
        <begin position="295"/>
        <end position="298"/>
    </location>
    <ligand>
        <name>GTP</name>
        <dbReference type="ChEBI" id="CHEBI:37565"/>
        <label>2</label>
    </ligand>
</feature>
<organism>
    <name type="scientific">Clostridium botulinum (strain Langeland / NCTC 10281 / Type F)</name>
    <dbReference type="NCBI Taxonomy" id="441772"/>
    <lineage>
        <taxon>Bacteria</taxon>
        <taxon>Bacillati</taxon>
        <taxon>Bacillota</taxon>
        <taxon>Clostridia</taxon>
        <taxon>Eubacteriales</taxon>
        <taxon>Clostridiaceae</taxon>
        <taxon>Clostridium</taxon>
    </lineage>
</organism>